<accession>P12702</accession>
<organism>
    <name type="scientific">Paracentrotus lividus</name>
    <name type="common">Common sea urchin</name>
    <dbReference type="NCBI Taxonomy" id="7656"/>
    <lineage>
        <taxon>Eukaryota</taxon>
        <taxon>Metazoa</taxon>
        <taxon>Echinodermata</taxon>
        <taxon>Eleutherozoa</taxon>
        <taxon>Echinozoa</taxon>
        <taxon>Echinoidea</taxon>
        <taxon>Euechinoidea</taxon>
        <taxon>Echinacea</taxon>
        <taxon>Camarodonta</taxon>
        <taxon>Echinidea</taxon>
        <taxon>Echinidae</taxon>
        <taxon>Paracentrotus</taxon>
    </lineage>
</organism>
<protein>
    <recommendedName>
        <fullName>Cytochrome c oxidase subunit 3</fullName>
        <ecNumber>7.1.1.9</ecNumber>
    </recommendedName>
    <alternativeName>
        <fullName>Cytochrome c oxidase polypeptide III</fullName>
    </alternativeName>
</protein>
<feature type="chain" id="PRO_0000183826" description="Cytochrome c oxidase subunit 3">
    <location>
        <begin position="1"/>
        <end position="261"/>
    </location>
</feature>
<feature type="transmembrane region" description="Helical" evidence="2">
    <location>
        <begin position="31"/>
        <end position="51"/>
    </location>
</feature>
<feature type="transmembrane region" description="Helical" evidence="2">
    <location>
        <begin position="82"/>
        <end position="102"/>
    </location>
</feature>
<feature type="transmembrane region" description="Helical" evidence="2">
    <location>
        <begin position="126"/>
        <end position="146"/>
    </location>
</feature>
<feature type="transmembrane region" description="Helical" evidence="2">
    <location>
        <begin position="159"/>
        <end position="179"/>
    </location>
</feature>
<feature type="transmembrane region" description="Helical" evidence="2">
    <location>
        <begin position="197"/>
        <end position="217"/>
    </location>
</feature>
<feature type="transmembrane region" description="Helical" evidence="2">
    <location>
        <begin position="239"/>
        <end position="259"/>
    </location>
</feature>
<gene>
    <name type="primary">COIII</name>
</gene>
<comment type="function">
    <text evidence="1">Component of the cytochrome c oxidase, the last enzyme in the mitochondrial electron transport chain which drives oxidative phosphorylation. The respiratory chain contains 3 multisubunit complexes succinate dehydrogenase (complex II, CII), ubiquinol-cytochrome c oxidoreductase (cytochrome b-c1 complex, complex III, CIII) and cytochrome c oxidase (complex IV, CIV), that cooperate to transfer electrons derived from NADH and succinate to molecular oxygen, creating an electrochemical gradient over the inner membrane that drives transmembrane transport and the ATP synthase. Cytochrome c oxidase is the component of the respiratory chain that catalyzes the reduction of oxygen to water. Electrons originating from reduced cytochrome c in the intermembrane space (IMS) are transferred via the dinuclear copper A center (CU(A)) of subunit 2 and heme A of subunit 1 to the active site in subunit 1, a binuclear center (BNC) formed by heme A3 and copper B (CU(B)). The BNC reduces molecular oxygen to 2 water molecules using 4 electrons from cytochrome c in the IMS and 4 protons from the mitochondrial matrix.</text>
</comment>
<comment type="catalytic activity">
    <reaction evidence="1">
        <text>4 Fe(II)-[cytochrome c] + O2 + 8 H(+)(in) = 4 Fe(III)-[cytochrome c] + 2 H2O + 4 H(+)(out)</text>
        <dbReference type="Rhea" id="RHEA:11436"/>
        <dbReference type="Rhea" id="RHEA-COMP:10350"/>
        <dbReference type="Rhea" id="RHEA-COMP:14399"/>
        <dbReference type="ChEBI" id="CHEBI:15377"/>
        <dbReference type="ChEBI" id="CHEBI:15378"/>
        <dbReference type="ChEBI" id="CHEBI:15379"/>
        <dbReference type="ChEBI" id="CHEBI:29033"/>
        <dbReference type="ChEBI" id="CHEBI:29034"/>
        <dbReference type="EC" id="7.1.1.9"/>
    </reaction>
    <physiologicalReaction direction="left-to-right" evidence="1">
        <dbReference type="Rhea" id="RHEA:11437"/>
    </physiologicalReaction>
</comment>
<comment type="subunit">
    <text evidence="1">Component of the cytochrome c oxidase (complex IV, CIV), a multisubunit enzyme composed of a catalytic core of 3 subunits and several supernumerary subunits. The complex exists as a monomer or a dimer and forms supercomplexes (SCs) in the inner mitochondrial membrane with ubiquinol-cytochrome c oxidoreductase (cytochrome b-c1 complex, complex III, CIII).</text>
</comment>
<comment type="subcellular location">
    <subcellularLocation>
        <location evidence="1">Mitochondrion inner membrane</location>
        <topology evidence="1">Multi-pass membrane protein</topology>
    </subcellularLocation>
</comment>
<comment type="similarity">
    <text evidence="3">Belongs to the cytochrome c oxidase subunit 3 family.</text>
</comment>
<comment type="sequence caution" evidence="3">
    <conflict type="erroneous initiation">
        <sequence resource="EMBL-CDS" id="AAA68140"/>
    </conflict>
</comment>
<name>COX3_PARLI</name>
<keyword id="KW-0472">Membrane</keyword>
<keyword id="KW-0496">Mitochondrion</keyword>
<keyword id="KW-0999">Mitochondrion inner membrane</keyword>
<keyword id="KW-1278">Translocase</keyword>
<keyword id="KW-0812">Transmembrane</keyword>
<keyword id="KW-1133">Transmembrane helix</keyword>
<dbReference type="EC" id="7.1.1.9"/>
<dbReference type="EMBL" id="J04815">
    <property type="protein sequence ID" value="AAA68140.1"/>
    <property type="status" value="ALT_INIT"/>
    <property type="molecule type" value="Genomic_DNA"/>
</dbReference>
<dbReference type="PIR" id="H34284">
    <property type="entry name" value="H34284"/>
</dbReference>
<dbReference type="SMR" id="P12702"/>
<dbReference type="CTD" id="4514"/>
<dbReference type="GO" id="GO:0005743">
    <property type="term" value="C:mitochondrial inner membrane"/>
    <property type="evidence" value="ECO:0007669"/>
    <property type="project" value="UniProtKB-SubCell"/>
</dbReference>
<dbReference type="GO" id="GO:0004129">
    <property type="term" value="F:cytochrome-c oxidase activity"/>
    <property type="evidence" value="ECO:0007669"/>
    <property type="project" value="UniProtKB-EC"/>
</dbReference>
<dbReference type="GO" id="GO:0006123">
    <property type="term" value="P:mitochondrial electron transport, cytochrome c to oxygen"/>
    <property type="evidence" value="ECO:0007669"/>
    <property type="project" value="TreeGrafter"/>
</dbReference>
<dbReference type="CDD" id="cd01665">
    <property type="entry name" value="Cyt_c_Oxidase_III"/>
    <property type="match status" value="1"/>
</dbReference>
<dbReference type="FunFam" id="1.10.287.70:FF:000082">
    <property type="entry name" value="Cytochrome c oxidase subunit 3"/>
    <property type="match status" value="1"/>
</dbReference>
<dbReference type="FunFam" id="1.20.120.80:FF:000002">
    <property type="entry name" value="Cytochrome c oxidase subunit 3"/>
    <property type="match status" value="1"/>
</dbReference>
<dbReference type="Gene3D" id="1.10.287.70">
    <property type="match status" value="1"/>
</dbReference>
<dbReference type="Gene3D" id="1.20.120.80">
    <property type="entry name" value="Cytochrome c oxidase, subunit III, four-helix bundle"/>
    <property type="match status" value="1"/>
</dbReference>
<dbReference type="InterPro" id="IPR024791">
    <property type="entry name" value="Cyt_c/ubiquinol_Oxase_su3"/>
</dbReference>
<dbReference type="InterPro" id="IPR033945">
    <property type="entry name" value="Cyt_c_oxase_su3_dom"/>
</dbReference>
<dbReference type="InterPro" id="IPR000298">
    <property type="entry name" value="Cyt_c_oxidase-like_su3"/>
</dbReference>
<dbReference type="InterPro" id="IPR035973">
    <property type="entry name" value="Cyt_c_oxidase_su3-like_sf"/>
</dbReference>
<dbReference type="InterPro" id="IPR013833">
    <property type="entry name" value="Cyt_c_oxidase_su3_a-hlx"/>
</dbReference>
<dbReference type="PANTHER" id="PTHR11403:SF7">
    <property type="entry name" value="CYTOCHROME C OXIDASE SUBUNIT 3"/>
    <property type="match status" value="1"/>
</dbReference>
<dbReference type="PANTHER" id="PTHR11403">
    <property type="entry name" value="CYTOCHROME C OXIDASE SUBUNIT III"/>
    <property type="match status" value="1"/>
</dbReference>
<dbReference type="Pfam" id="PF00510">
    <property type="entry name" value="COX3"/>
    <property type="match status" value="1"/>
</dbReference>
<dbReference type="SUPFAM" id="SSF81452">
    <property type="entry name" value="Cytochrome c oxidase subunit III-like"/>
    <property type="match status" value="1"/>
</dbReference>
<dbReference type="PROSITE" id="PS50253">
    <property type="entry name" value="COX3"/>
    <property type="match status" value="1"/>
</dbReference>
<geneLocation type="mitochondrion"/>
<proteinExistence type="inferred from homology"/>
<sequence length="261" mass="29627">MMAHQHPYYLVEQSPWPLTGAISGLMMNLGLVLWFHTGNIILLFTGLLLLILTLVNWWRDIVREATFQGSHTAIVENGLRYPMILFITSEVCFFFAFFWAFFHSSLAPAVEIGVTWPPSGITPLNPFLVPLLNTAVLLSSGVTITWSHHSILAGNRNEAIQALFLTVVLGIYFTILQAWEYIDAPFTIADSVYGSTFFVATGFHGLHVIIGTTFLLVCLIRLSGHHFSTHHHFGFEAAAWYWHFVDVVWLFLYVCIYWWGS</sequence>
<evidence type="ECO:0000250" key="1">
    <source>
        <dbReference type="UniProtKB" id="P00420"/>
    </source>
</evidence>
<evidence type="ECO:0000255" key="2"/>
<evidence type="ECO:0000305" key="3"/>
<reference key="1">
    <citation type="journal article" date="1989" name="J. Biol. Chem.">
        <title>The complete nucleotide sequence, gene organization, and genetic code of the mitochondrial genome of Paracentrotus lividus.</title>
        <authorList>
            <person name="Cantatore P."/>
            <person name="Roberti M."/>
            <person name="Rainaldi G."/>
            <person name="Gadaleta M.N."/>
            <person name="Saccone C."/>
        </authorList>
    </citation>
    <scope>NUCLEOTIDE SEQUENCE [GENOMIC DNA]</scope>
</reference>